<accession>O77769</accession>
<accession>Q3MHX2</accession>
<proteinExistence type="evidence at transcript level"/>
<dbReference type="EC" id="1.1.1.300" evidence="2"/>
<dbReference type="EMBL" id="AF061742">
    <property type="protein sequence ID" value="AAC63264.1"/>
    <property type="molecule type" value="mRNA"/>
</dbReference>
<dbReference type="EMBL" id="BC104575">
    <property type="protein sequence ID" value="AAI04576.1"/>
    <property type="molecule type" value="mRNA"/>
</dbReference>
<dbReference type="RefSeq" id="NP_776605.2">
    <property type="nucleotide sequence ID" value="NM_174180.3"/>
</dbReference>
<dbReference type="SMR" id="O77769"/>
<dbReference type="FunCoup" id="O77769">
    <property type="interactions" value="377"/>
</dbReference>
<dbReference type="STRING" id="9913.ENSBTAP00000033930"/>
<dbReference type="PaxDb" id="9913-ENSBTAP00000033930"/>
<dbReference type="GeneID" id="281482"/>
<dbReference type="KEGG" id="bta:281482"/>
<dbReference type="CTD" id="9249"/>
<dbReference type="eggNOG" id="KOG1201">
    <property type="taxonomic scope" value="Eukaryota"/>
</dbReference>
<dbReference type="InParanoid" id="O77769"/>
<dbReference type="OrthoDB" id="6251714at2759"/>
<dbReference type="Proteomes" id="UP000009136">
    <property type="component" value="Unplaced"/>
</dbReference>
<dbReference type="GO" id="GO:0005811">
    <property type="term" value="C:lipid droplet"/>
    <property type="evidence" value="ECO:0000318"/>
    <property type="project" value="GO_Central"/>
</dbReference>
<dbReference type="GO" id="GO:0016020">
    <property type="term" value="C:membrane"/>
    <property type="evidence" value="ECO:0007669"/>
    <property type="project" value="UniProtKB-SubCell"/>
</dbReference>
<dbReference type="GO" id="GO:0004745">
    <property type="term" value="F:all-trans-retinol dehydrogenase (NAD+) activity"/>
    <property type="evidence" value="ECO:0000318"/>
    <property type="project" value="GO_Central"/>
</dbReference>
<dbReference type="GO" id="GO:0052650">
    <property type="term" value="F:all-trans-retinol dehydrogenase (NADP+) activity"/>
    <property type="evidence" value="ECO:0007669"/>
    <property type="project" value="UniProtKB-EC"/>
</dbReference>
<dbReference type="GO" id="GO:0048385">
    <property type="term" value="P:regulation of retinoic acid receptor signaling pathway"/>
    <property type="evidence" value="ECO:0000318"/>
    <property type="project" value="GO_Central"/>
</dbReference>
<dbReference type="GO" id="GO:0001523">
    <property type="term" value="P:retinoid metabolic process"/>
    <property type="evidence" value="ECO:0000318"/>
    <property type="project" value="GO_Central"/>
</dbReference>
<dbReference type="CDD" id="cd05339">
    <property type="entry name" value="17beta-HSDXI-like_SDR_c"/>
    <property type="match status" value="1"/>
</dbReference>
<dbReference type="FunFam" id="3.40.50.720:FF:000131">
    <property type="entry name" value="Short-chain dehydrogenase/reductase 3"/>
    <property type="match status" value="1"/>
</dbReference>
<dbReference type="Gene3D" id="3.40.50.720">
    <property type="entry name" value="NAD(P)-binding Rossmann-like Domain"/>
    <property type="match status" value="1"/>
</dbReference>
<dbReference type="InterPro" id="IPR036291">
    <property type="entry name" value="NAD(P)-bd_dom_sf"/>
</dbReference>
<dbReference type="InterPro" id="IPR002347">
    <property type="entry name" value="SDR_fam"/>
</dbReference>
<dbReference type="PANTHER" id="PTHR24322">
    <property type="entry name" value="PKSB"/>
    <property type="match status" value="1"/>
</dbReference>
<dbReference type="PANTHER" id="PTHR24322:SF483">
    <property type="entry name" value="SHORT-CHAIN DEHYDROGENASE_REDUCTASE 3"/>
    <property type="match status" value="1"/>
</dbReference>
<dbReference type="Pfam" id="PF00106">
    <property type="entry name" value="adh_short"/>
    <property type="match status" value="1"/>
</dbReference>
<dbReference type="PRINTS" id="PR00081">
    <property type="entry name" value="GDHRDH"/>
</dbReference>
<dbReference type="PRINTS" id="PR00080">
    <property type="entry name" value="SDRFAMILY"/>
</dbReference>
<dbReference type="SMART" id="SM00822">
    <property type="entry name" value="PKS_KR"/>
    <property type="match status" value="1"/>
</dbReference>
<dbReference type="SUPFAM" id="SSF51735">
    <property type="entry name" value="NAD(P)-binding Rossmann-fold domains"/>
    <property type="match status" value="1"/>
</dbReference>
<protein>
    <recommendedName>
        <fullName>Short-chain dehydrogenase/reductase 3</fullName>
        <ecNumber evidence="2">1.1.1.300</ecNumber>
    </recommendedName>
    <alternativeName>
        <fullName>Retinal short-chain dehydrogenase/reductase 1</fullName>
        <shortName>retSDR1</shortName>
    </alternativeName>
</protein>
<keyword id="KW-0443">Lipid metabolism</keyword>
<keyword id="KW-0472">Membrane</keyword>
<keyword id="KW-0521">NADP</keyword>
<keyword id="KW-0560">Oxidoreductase</keyword>
<keyword id="KW-1185">Reference proteome</keyword>
<keyword id="KW-0812">Transmembrane</keyword>
<keyword id="KW-1133">Transmembrane helix</keyword>
<name>DHRS3_BOVIN</name>
<reference key="1">
    <citation type="journal article" date="1998" name="J. Biol. Chem.">
        <title>Molecular characterization of a novel short-chain dehydrogenase/reductase that reduces all-trans-retinal.</title>
        <authorList>
            <person name="Haeseleer F."/>
            <person name="Huang J."/>
            <person name="Lebioda L."/>
            <person name="Saari J.C."/>
            <person name="Palczewski K."/>
        </authorList>
    </citation>
    <scope>NUCLEOTIDE SEQUENCE [MRNA]</scope>
    <scope>TISSUE SPECIFICITY</scope>
    <source>
        <tissue>Retina</tissue>
    </source>
</reference>
<reference key="2">
    <citation type="submission" date="2005-09" db="EMBL/GenBank/DDBJ databases">
        <authorList>
            <consortium name="NIH - Mammalian Gene Collection (MGC) project"/>
        </authorList>
    </citation>
    <scope>NUCLEOTIDE SEQUENCE [LARGE SCALE MRNA]</scope>
    <source>
        <strain>Hereford</strain>
        <tissue>Ascending colon</tissue>
    </source>
</reference>
<sequence>MVWKRLGALVVFPLQMIYLVVKAAVGLVLPAKLRDLSRENVLITGGGRGIGRQLAREFAERGARKIVLWGRTEKCLKETTEEIRQMGTECHYFICDVGNREEVYQTAKAVREKVGDITILVNNAAVVHGKSLMDSDDDALPKSQHINTLGQFWTTKAFLPRMLELQNGHIVCLNSVLALSAIPGAIDYCTSKASAFAFMESLTLGLLDCPGVSATTVLPFHTSTEMFQGMRVRFPNLFPPLKPETVARRTVEAVQLNQALLLLPWTMHALIILKSILPQAALEEIHKFSGTYTCINTFKGRT</sequence>
<gene>
    <name type="primary">DHRS3</name>
</gene>
<evidence type="ECO:0000250" key="1"/>
<evidence type="ECO:0000250" key="2">
    <source>
        <dbReference type="UniProtKB" id="O75911"/>
    </source>
</evidence>
<evidence type="ECO:0000255" key="3"/>
<evidence type="ECO:0000269" key="4">
    <source>
    </source>
</evidence>
<evidence type="ECO:0000305" key="5"/>
<feature type="chain" id="PRO_0000054643" description="Short-chain dehydrogenase/reductase 3">
    <location>
        <begin position="1"/>
        <end position="302"/>
    </location>
</feature>
<feature type="transmembrane region" description="Helical" evidence="3">
    <location>
        <begin position="9"/>
        <end position="29"/>
    </location>
</feature>
<feature type="transmembrane region" description="Helical" evidence="3">
    <location>
        <begin position="170"/>
        <end position="190"/>
    </location>
</feature>
<feature type="transmembrane region" description="Helical" evidence="3">
    <location>
        <begin position="195"/>
        <end position="215"/>
    </location>
</feature>
<feature type="transmembrane region" description="Helical" evidence="3">
    <location>
        <begin position="253"/>
        <end position="273"/>
    </location>
</feature>
<feature type="active site" description="Proton acceptor" evidence="1">
    <location>
        <position position="188"/>
    </location>
</feature>
<feature type="binding site" evidence="1">
    <location>
        <position position="175"/>
    </location>
    <ligand>
        <name>substrate</name>
    </ligand>
</feature>
<feature type="sequence conflict" description="In Ref. 2; AAI04576." evidence="5" ref="2">
    <original>R</original>
    <variation>L</variation>
    <location>
        <position position="56"/>
    </location>
</feature>
<feature type="sequence conflict" description="In Ref. 2; AAI04576." evidence="5" ref="2">
    <original>P</original>
    <variation>L</variation>
    <location>
        <position position="141"/>
    </location>
</feature>
<feature type="sequence conflict" description="In Ref. 2; AAI04576." evidence="5" ref="2">
    <original>I</original>
    <variation>M</variation>
    <location>
        <position position="295"/>
    </location>
</feature>
<comment type="function">
    <text evidence="2">Catalyzes the reduction of all-trans-retinal to all-trans-retinol in the presence of NADPH.</text>
</comment>
<comment type="catalytic activity">
    <reaction evidence="2">
        <text>all-trans-retinol + NADP(+) = all-trans-retinal + NADPH + H(+)</text>
        <dbReference type="Rhea" id="RHEA:25033"/>
        <dbReference type="ChEBI" id="CHEBI:15378"/>
        <dbReference type="ChEBI" id="CHEBI:17336"/>
        <dbReference type="ChEBI" id="CHEBI:17898"/>
        <dbReference type="ChEBI" id="CHEBI:57783"/>
        <dbReference type="ChEBI" id="CHEBI:58349"/>
        <dbReference type="EC" id="1.1.1.300"/>
    </reaction>
</comment>
<comment type="subcellular location">
    <subcellularLocation>
        <location evidence="5">Membrane</location>
        <topology evidence="5">Multi-pass membrane protein</topology>
    </subcellularLocation>
</comment>
<comment type="tissue specificity">
    <text evidence="4">In the retina, expressed in cone but not rod outer segments.</text>
</comment>
<comment type="similarity">
    <text evidence="5">Belongs to the short-chain dehydrogenases/reductases (SDR) family.</text>
</comment>
<organism>
    <name type="scientific">Bos taurus</name>
    <name type="common">Bovine</name>
    <dbReference type="NCBI Taxonomy" id="9913"/>
    <lineage>
        <taxon>Eukaryota</taxon>
        <taxon>Metazoa</taxon>
        <taxon>Chordata</taxon>
        <taxon>Craniata</taxon>
        <taxon>Vertebrata</taxon>
        <taxon>Euteleostomi</taxon>
        <taxon>Mammalia</taxon>
        <taxon>Eutheria</taxon>
        <taxon>Laurasiatheria</taxon>
        <taxon>Artiodactyla</taxon>
        <taxon>Ruminantia</taxon>
        <taxon>Pecora</taxon>
        <taxon>Bovidae</taxon>
        <taxon>Bovinae</taxon>
        <taxon>Bos</taxon>
    </lineage>
</organism>